<comment type="function">
    <text>Core component of nucleosome. Nucleosomes wrap and compact DNA into chromatin, limiting DNA accessibility to the cellular machineries which require DNA as a template. Histones thereby play a central role in transcription regulation, DNA repair, DNA replication and chromosomal stability. DNA accessibility is regulated via a complex set of post-translational modifications of histones, also called histone code, and nucleosome remodeling.</text>
</comment>
<comment type="subunit">
    <text>The nucleosome is a histone octamer containing two molecules each of H2A, H2B, H3 and H4 assembled in one H3-H4 heterotetramer and two H2A-H2B heterodimers. The octamer wraps approximately 147 bp of DNA.</text>
</comment>
<comment type="subcellular location">
    <subcellularLocation>
        <location evidence="1">Nucleus</location>
    </subcellularLocation>
    <subcellularLocation>
        <location evidence="1">Chromosome</location>
    </subcellularLocation>
</comment>
<comment type="similarity">
    <text evidence="4">Belongs to the histone H4 family.</text>
</comment>
<organism>
    <name type="scientific">Asellus aquaticus</name>
    <name type="common">Water hoglouse</name>
    <dbReference type="NCBI Taxonomy" id="92525"/>
    <lineage>
        <taxon>Eukaryota</taxon>
        <taxon>Metazoa</taxon>
        <taxon>Ecdysozoa</taxon>
        <taxon>Arthropoda</taxon>
        <taxon>Crustacea</taxon>
        <taxon>Multicrustacea</taxon>
        <taxon>Malacostraca</taxon>
        <taxon>Eumalacostraca</taxon>
        <taxon>Peracarida</taxon>
        <taxon>Isopoda</taxon>
        <taxon>Asellota</taxon>
        <taxon>Aselloidea</taxon>
        <taxon>Asellidae</taxon>
        <taxon>Asellus</taxon>
    </lineage>
</organism>
<dbReference type="EMBL" id="AJ238321">
    <property type="protein sequence ID" value="CAB64686.1"/>
    <property type="molecule type" value="Genomic_DNA"/>
</dbReference>
<dbReference type="SMR" id="P84047"/>
<dbReference type="GO" id="GO:0000786">
    <property type="term" value="C:nucleosome"/>
    <property type="evidence" value="ECO:0000250"/>
    <property type="project" value="UniProtKB"/>
</dbReference>
<dbReference type="GO" id="GO:0005634">
    <property type="term" value="C:nucleus"/>
    <property type="evidence" value="ECO:0007669"/>
    <property type="project" value="UniProtKB-SubCell"/>
</dbReference>
<dbReference type="GO" id="GO:0003677">
    <property type="term" value="F:DNA binding"/>
    <property type="evidence" value="ECO:0000250"/>
    <property type="project" value="UniProtKB"/>
</dbReference>
<dbReference type="GO" id="GO:0046982">
    <property type="term" value="F:protein heterodimerization activity"/>
    <property type="evidence" value="ECO:0007669"/>
    <property type="project" value="InterPro"/>
</dbReference>
<dbReference type="GO" id="GO:0030527">
    <property type="term" value="F:structural constituent of chromatin"/>
    <property type="evidence" value="ECO:0007669"/>
    <property type="project" value="InterPro"/>
</dbReference>
<dbReference type="GO" id="GO:0006334">
    <property type="term" value="P:nucleosome assembly"/>
    <property type="evidence" value="ECO:0000250"/>
    <property type="project" value="UniProtKB"/>
</dbReference>
<dbReference type="CDD" id="cd22912">
    <property type="entry name" value="HFD_H4"/>
    <property type="match status" value="1"/>
</dbReference>
<dbReference type="FunFam" id="1.10.20.10:FF:000002">
    <property type="entry name" value="Histone H4"/>
    <property type="match status" value="1"/>
</dbReference>
<dbReference type="Gene3D" id="1.10.20.10">
    <property type="entry name" value="Histone, subunit A"/>
    <property type="match status" value="1"/>
</dbReference>
<dbReference type="InterPro" id="IPR035425">
    <property type="entry name" value="CENP-T/H4_C"/>
</dbReference>
<dbReference type="InterPro" id="IPR009072">
    <property type="entry name" value="Histone-fold"/>
</dbReference>
<dbReference type="InterPro" id="IPR001951">
    <property type="entry name" value="Histone_H4"/>
</dbReference>
<dbReference type="InterPro" id="IPR019809">
    <property type="entry name" value="Histone_H4_CS"/>
</dbReference>
<dbReference type="InterPro" id="IPR004823">
    <property type="entry name" value="TAF_TATA-bd_Histone-like_dom"/>
</dbReference>
<dbReference type="PANTHER" id="PTHR10484">
    <property type="entry name" value="HISTONE H4"/>
    <property type="match status" value="1"/>
</dbReference>
<dbReference type="Pfam" id="PF15511">
    <property type="entry name" value="CENP-T_C"/>
    <property type="match status" value="1"/>
</dbReference>
<dbReference type="PRINTS" id="PR00623">
    <property type="entry name" value="HISTONEH4"/>
</dbReference>
<dbReference type="SMART" id="SM00417">
    <property type="entry name" value="H4"/>
    <property type="match status" value="1"/>
</dbReference>
<dbReference type="SMART" id="SM00803">
    <property type="entry name" value="TAF"/>
    <property type="match status" value="1"/>
</dbReference>
<dbReference type="SUPFAM" id="SSF47113">
    <property type="entry name" value="Histone-fold"/>
    <property type="match status" value="1"/>
</dbReference>
<dbReference type="PROSITE" id="PS00047">
    <property type="entry name" value="HISTONE_H4"/>
    <property type="match status" value="1"/>
</dbReference>
<gene>
    <name type="primary">His4</name>
    <name type="synonym">H4</name>
</gene>
<sequence>MTGRGKGGKGLGKGGAKRHRKVLRDNIQGITKPAIRRLARRGGVKRISGLIYEETRGVLKVFLENVIRDAVTYTEHAKRKTVTAMDVVYALKRQGRTLYGFGG</sequence>
<keyword id="KW-0007">Acetylation</keyword>
<keyword id="KW-0158">Chromosome</keyword>
<keyword id="KW-0238">DNA-binding</keyword>
<keyword id="KW-0488">Methylation</keyword>
<keyword id="KW-0544">Nucleosome core</keyword>
<keyword id="KW-0539">Nucleus</keyword>
<proteinExistence type="inferred from homology"/>
<evidence type="ECO:0000250" key="1"/>
<evidence type="ECO:0000250" key="2">
    <source>
        <dbReference type="UniProtKB" id="P62805"/>
    </source>
</evidence>
<evidence type="ECO:0000256" key="3">
    <source>
        <dbReference type="SAM" id="MobiDB-lite"/>
    </source>
</evidence>
<evidence type="ECO:0000305" key="4"/>
<reference key="1">
    <citation type="journal article" date="2000" name="Genome">
        <title>Organization, nucleotide sequence, and chromosomal mapping of a tandemly repeated unit containing the four core histone genes and a 5S rRNA gene in an isopod crustacean species.</title>
        <authorList>
            <person name="Barzotti R."/>
            <person name="Pelliccia F."/>
            <person name="Bucciarelli E."/>
            <person name="Rocchi A."/>
        </authorList>
    </citation>
    <scope>NUCLEOTIDE SEQUENCE [GENOMIC DNA]</scope>
</reference>
<protein>
    <recommendedName>
        <fullName>Histone H4</fullName>
    </recommendedName>
</protein>
<feature type="initiator methionine" description="Removed" evidence="1">
    <location>
        <position position="1"/>
    </location>
</feature>
<feature type="chain" id="PRO_0000158283" description="Histone H4">
    <location>
        <begin position="2"/>
        <end position="103"/>
    </location>
</feature>
<feature type="DNA-binding region">
    <location>
        <begin position="17"/>
        <end position="21"/>
    </location>
</feature>
<feature type="region of interest" description="Disordered" evidence="3">
    <location>
        <begin position="1"/>
        <end position="20"/>
    </location>
</feature>
<feature type="compositionally biased region" description="Gly residues" evidence="3">
    <location>
        <begin position="1"/>
        <end position="14"/>
    </location>
</feature>
<feature type="modified residue" description="N6-acetyl-N6-methyllysine; alternate" evidence="2">
    <location>
        <position position="6"/>
    </location>
</feature>
<feature type="modified residue" description="N6-acetyl-N6-methyllysine; alternate" evidence="2">
    <location>
        <position position="13"/>
    </location>
</feature>
<accession>P84047</accession>
<accession>P02307</accession>
<accession>Q9VFH7</accession>
<name>H4_ASEAQ</name>